<sequence length="134" mass="14100">MRGVFFVAVAVAIFARSSAEAKLLSEAAPGLAADAVISGESRERFLRVADSEDDDLAAPADDGKTEERAPKFKSLSEINKKLDEEVMVHVSKILGNMGAIHADNIAKARAALEAAHKSGDITDKQLAAGLAKLV</sequence>
<name>AV238_PHYSO</name>
<proteinExistence type="evidence at protein level"/>
<organism>
    <name type="scientific">Phytophthora sojae</name>
    <name type="common">Soybean stem and root rot agent</name>
    <name type="synonym">Phytophthora megasperma f. sp. glycines</name>
    <dbReference type="NCBI Taxonomy" id="67593"/>
    <lineage>
        <taxon>Eukaryota</taxon>
        <taxon>Sar</taxon>
        <taxon>Stramenopiles</taxon>
        <taxon>Oomycota</taxon>
        <taxon>Peronosporales</taxon>
        <taxon>Peronosporaceae</taxon>
        <taxon>Phytophthora</taxon>
    </lineage>
</organism>
<comment type="function">
    <text evidence="3 4">Effector that, due to the lack of a histidine residue at position 79, is not able to induce cell death in tomato, tobacco, eggplant, potato, or in A.thaliana.</text>
</comment>
<comment type="subcellular location">
    <subcellularLocation>
        <location evidence="4">Secreted</location>
    </subcellularLocation>
    <subcellularLocation>
        <location evidence="4">Host cytoplasm</location>
    </subcellularLocation>
    <subcellularLocation>
        <location evidence="4">Host nucleus</location>
    </subcellularLocation>
</comment>
<comment type="domain">
    <text evidence="7">The RxLR-dEER motif acts to carry the protein into the host cell cytoplasm through binding to cell surface phosphatidylinositol-3-phosphate.</text>
</comment>
<comment type="miscellaneous">
    <text evidence="4">Avh238 is highly polymorphic among P.sojae isolates.</text>
</comment>
<comment type="similarity">
    <text evidence="6">Belongs to the RxLR effector family.</text>
</comment>
<keyword id="KW-1035">Host cytoplasm</keyword>
<keyword id="KW-1048">Host nucleus</keyword>
<keyword id="KW-0964">Secreted</keyword>
<keyword id="KW-0732">Signal</keyword>
<keyword id="KW-0843">Virulence</keyword>
<protein>
    <recommendedName>
        <fullName evidence="5">RxLR effector protein Avh238</fullName>
    </recommendedName>
    <alternativeName>
        <fullName evidence="5">Avirulence homolog protein 238</fullName>
    </alternativeName>
</protein>
<reference key="1">
    <citation type="journal article" date="2011" name="Plant Cell">
        <title>Transcriptional programming and functional interactions within the Phytophthora sojae RXLR effector repertoire.</title>
        <authorList>
            <person name="Wang Q."/>
            <person name="Han C."/>
            <person name="Ferreira A.O."/>
            <person name="Yu X."/>
            <person name="Ye W."/>
            <person name="Tripathy S."/>
            <person name="Kale S.D."/>
            <person name="Gu B."/>
            <person name="Sheng Y."/>
            <person name="Sui Y."/>
            <person name="Wang X."/>
            <person name="Zhang Z."/>
            <person name="Cheng B."/>
            <person name="Dong S."/>
            <person name="Shan W."/>
            <person name="Zheng X."/>
            <person name="Dou D."/>
            <person name="Tyler B.M."/>
            <person name="Wang Y."/>
        </authorList>
    </citation>
    <scope>NUCLEOTIDE SEQUENCE [GENOMIC DNA]</scope>
    <scope>IDENTIFICATION</scope>
    <scope>FUNCTION</scope>
    <scope>INDUCTION</scope>
    <scope>DOMAIN</scope>
    <source>
        <strain>P7076</strain>
    </source>
</reference>
<reference key="2">
    <citation type="journal article" date="2017" name="New Phytol.">
        <title>Distinct regions of the Phytophthora essential effector Avh238 determine its function in cell death activation and plant immunity suppression.</title>
        <authorList>
            <person name="Yang B."/>
            <person name="Wang Q."/>
            <person name="Jing M."/>
            <person name="Guo B."/>
            <person name="Wu J."/>
            <person name="Wang H."/>
            <person name="Wang Y."/>
            <person name="Lin L."/>
            <person name="Wang Y."/>
            <person name="Ye W."/>
            <person name="Dong S."/>
            <person name="Wang Y."/>
        </authorList>
    </citation>
    <scope>FUNCTION</scope>
    <scope>SUBCELLULAR LOCATION</scope>
    <scope>MUTAGENESIS OF ASN-79</scope>
</reference>
<accession>G1FSB5</accession>
<gene>
    <name evidence="5" type="primary">Avh238</name>
</gene>
<dbReference type="EMBL" id="JN254190">
    <property type="protein sequence ID" value="AEK81003.1"/>
    <property type="molecule type" value="Genomic_DNA"/>
</dbReference>
<dbReference type="SMR" id="G1FSB5"/>
<dbReference type="VEuPathDB" id="FungiDB:PHYSODRAFT_285342"/>
<dbReference type="GO" id="GO:0005576">
    <property type="term" value="C:extracellular region"/>
    <property type="evidence" value="ECO:0007669"/>
    <property type="project" value="UniProtKB-SubCell"/>
</dbReference>
<dbReference type="GO" id="GO:0030430">
    <property type="term" value="C:host cell cytoplasm"/>
    <property type="evidence" value="ECO:0007669"/>
    <property type="project" value="UniProtKB-SubCell"/>
</dbReference>
<dbReference type="GO" id="GO:0042025">
    <property type="term" value="C:host cell nucleus"/>
    <property type="evidence" value="ECO:0007669"/>
    <property type="project" value="UniProtKB-SubCell"/>
</dbReference>
<feature type="signal peptide" evidence="1">
    <location>
        <begin position="1"/>
        <end position="21"/>
    </location>
</feature>
<feature type="chain" id="PRO_5003412241" description="RxLR effector protein Avh238" evidence="1">
    <location>
        <begin position="22"/>
        <end position="134"/>
    </location>
</feature>
<feature type="region of interest" description="Disordered" evidence="2">
    <location>
        <begin position="50"/>
        <end position="72"/>
    </location>
</feature>
<feature type="short sequence motif" description="RxLR-dEER" evidence="7">
    <location>
        <begin position="44"/>
        <end position="68"/>
    </location>
</feature>
<feature type="compositionally biased region" description="Basic and acidic residues" evidence="2">
    <location>
        <begin position="61"/>
        <end position="70"/>
    </location>
</feature>
<feature type="mutagenesis site" description="Restores the ability to induce cell death in host." evidence="4">
    <original>N</original>
    <variation>H</variation>
    <location>
        <position position="79"/>
    </location>
</feature>
<evidence type="ECO:0000255" key="1"/>
<evidence type="ECO:0000256" key="2">
    <source>
        <dbReference type="SAM" id="MobiDB-lite"/>
    </source>
</evidence>
<evidence type="ECO:0000269" key="3">
    <source>
    </source>
</evidence>
<evidence type="ECO:0000269" key="4">
    <source>
    </source>
</evidence>
<evidence type="ECO:0000303" key="5">
    <source>
    </source>
</evidence>
<evidence type="ECO:0000305" key="6"/>
<evidence type="ECO:0000305" key="7">
    <source>
    </source>
</evidence>